<organism>
    <name type="scientific">Pyrobaculum arsenaticum (strain DSM 13514 / JCM 11321 / PZ6)</name>
    <dbReference type="NCBI Taxonomy" id="340102"/>
    <lineage>
        <taxon>Archaea</taxon>
        <taxon>Thermoproteota</taxon>
        <taxon>Thermoprotei</taxon>
        <taxon>Thermoproteales</taxon>
        <taxon>Thermoproteaceae</taxon>
        <taxon>Pyrobaculum</taxon>
    </lineage>
</organism>
<dbReference type="EC" id="6.3.4.23" evidence="2"/>
<dbReference type="EMBL" id="CP000660">
    <property type="protein sequence ID" value="ABP51809.1"/>
    <property type="molecule type" value="Genomic_DNA"/>
</dbReference>
<dbReference type="SMR" id="A4WN42"/>
<dbReference type="STRING" id="340102.Pars_2265"/>
<dbReference type="KEGG" id="pas:Pars_2265"/>
<dbReference type="HOGENOM" id="CLU_065084_0_0_2"/>
<dbReference type="OrthoDB" id="98133at2157"/>
<dbReference type="PhylomeDB" id="A4WN42"/>
<dbReference type="UniPathway" id="UPA00074">
    <property type="reaction ID" value="UER00134"/>
</dbReference>
<dbReference type="Proteomes" id="UP000001567">
    <property type="component" value="Chromosome"/>
</dbReference>
<dbReference type="GO" id="GO:0005524">
    <property type="term" value="F:ATP binding"/>
    <property type="evidence" value="ECO:0007669"/>
    <property type="project" value="UniProtKB-KW"/>
</dbReference>
<dbReference type="GO" id="GO:0016879">
    <property type="term" value="F:ligase activity, forming carbon-nitrogen bonds"/>
    <property type="evidence" value="ECO:0007669"/>
    <property type="project" value="UniProtKB-UniRule"/>
</dbReference>
<dbReference type="GO" id="GO:0000287">
    <property type="term" value="F:magnesium ion binding"/>
    <property type="evidence" value="ECO:0007669"/>
    <property type="project" value="InterPro"/>
</dbReference>
<dbReference type="GO" id="GO:0006189">
    <property type="term" value="P:'de novo' IMP biosynthetic process"/>
    <property type="evidence" value="ECO:0007669"/>
    <property type="project" value="UniProtKB-UniRule"/>
</dbReference>
<dbReference type="Gene3D" id="3.40.50.20">
    <property type="match status" value="1"/>
</dbReference>
<dbReference type="Gene3D" id="3.30.1490.20">
    <property type="entry name" value="ATP-grasp fold, A domain"/>
    <property type="match status" value="1"/>
</dbReference>
<dbReference type="Gene3D" id="3.30.470.20">
    <property type="entry name" value="ATP-grasp fold, B domain"/>
    <property type="match status" value="1"/>
</dbReference>
<dbReference type="HAMAP" id="MF_01163">
    <property type="entry name" value="IMP_biosynth_PurP"/>
    <property type="match status" value="1"/>
</dbReference>
<dbReference type="InterPro" id="IPR011761">
    <property type="entry name" value="ATP-grasp"/>
</dbReference>
<dbReference type="InterPro" id="IPR013815">
    <property type="entry name" value="ATP_grasp_subdomain_1"/>
</dbReference>
<dbReference type="InterPro" id="IPR023656">
    <property type="entry name" value="IMP_biosynth_PurP"/>
</dbReference>
<dbReference type="InterPro" id="IPR009720">
    <property type="entry name" value="IMP_biosynth_PurP_C"/>
</dbReference>
<dbReference type="InterPro" id="IPR010672">
    <property type="entry name" value="IMP_biosynth_PurP_N"/>
</dbReference>
<dbReference type="InterPro" id="IPR016185">
    <property type="entry name" value="PreATP-grasp_dom_sf"/>
</dbReference>
<dbReference type="PANTHER" id="PTHR38147:SF2">
    <property type="entry name" value="5-FORMAMINOIMIDAZOLE-4-CARBOXAMIDE-1-(BETA)-D-RIBOFURANOSYL 5'-MONOPHOSPHATE SYNTHETASE"/>
    <property type="match status" value="1"/>
</dbReference>
<dbReference type="PANTHER" id="PTHR38147">
    <property type="entry name" value="5-FORMAMINOIMIDAZOLE-4-CARBOXAMIDE-1-(BETA)-D-RIBOFURANOSYL 5'-MONOPHOSPHATE SYNTHETASE-RELATED"/>
    <property type="match status" value="1"/>
</dbReference>
<dbReference type="Pfam" id="PF06849">
    <property type="entry name" value="DUF1246"/>
    <property type="match status" value="1"/>
</dbReference>
<dbReference type="Pfam" id="PF06973">
    <property type="entry name" value="DUF1297"/>
    <property type="match status" value="1"/>
</dbReference>
<dbReference type="PIRSF" id="PIRSF004602">
    <property type="entry name" value="ATPgrasp_PurP"/>
    <property type="match status" value="1"/>
</dbReference>
<dbReference type="SUPFAM" id="SSF56059">
    <property type="entry name" value="Glutathione synthetase ATP-binding domain-like"/>
    <property type="match status" value="1"/>
</dbReference>
<dbReference type="SUPFAM" id="SSF52440">
    <property type="entry name" value="PreATP-grasp domain"/>
    <property type="match status" value="1"/>
</dbReference>
<dbReference type="PROSITE" id="PS50975">
    <property type="entry name" value="ATP_GRASP"/>
    <property type="match status" value="1"/>
</dbReference>
<gene>
    <name evidence="2" type="primary">purP</name>
    <name type="ordered locus">Pars_2265</name>
</gene>
<proteinExistence type="inferred from homology"/>
<reference key="1">
    <citation type="submission" date="2007-04" db="EMBL/GenBank/DDBJ databases">
        <title>Complete sequence of Pyrobaculum arsenaticum DSM 13514.</title>
        <authorList>
            <consortium name="US DOE Joint Genome Institute"/>
            <person name="Copeland A."/>
            <person name="Lucas S."/>
            <person name="Lapidus A."/>
            <person name="Barry K."/>
            <person name="Glavina del Rio T."/>
            <person name="Dalin E."/>
            <person name="Tice H."/>
            <person name="Pitluck S."/>
            <person name="Chain P."/>
            <person name="Malfatti S."/>
            <person name="Shin M."/>
            <person name="Vergez L."/>
            <person name="Schmutz J."/>
            <person name="Larimer F."/>
            <person name="Land M."/>
            <person name="Hauser L."/>
            <person name="Kyrpides N."/>
            <person name="Mikhailova N."/>
            <person name="Cozen A.E."/>
            <person name="Fitz-Gibbon S.T."/>
            <person name="House C.H."/>
            <person name="Saltikov C."/>
            <person name="Lowe T.M."/>
            <person name="Richardson P."/>
        </authorList>
    </citation>
    <scope>NUCLEOTIDE SEQUENCE [LARGE SCALE GENOMIC DNA]</scope>
    <source>
        <strain>ATCC 700994 / DSM 13514 / JCM 11321 / PZ6</strain>
    </source>
</reference>
<keyword id="KW-0067">ATP-binding</keyword>
<keyword id="KW-0436">Ligase</keyword>
<keyword id="KW-0460">Magnesium</keyword>
<keyword id="KW-0464">Manganese</keyword>
<keyword id="KW-0479">Metal-binding</keyword>
<keyword id="KW-0547">Nucleotide-binding</keyword>
<keyword id="KW-0658">Purine biosynthesis</keyword>
<name>PURP_PYRAR</name>
<protein>
    <recommendedName>
        <fullName evidence="2">5-formaminoimidazole-4-carboxamide-1-(beta)-D-ribofuranosyl 5'-monophosphate synthetase</fullName>
        <ecNumber evidence="2">6.3.4.23</ecNumber>
    </recommendedName>
    <alternativeName>
        <fullName evidence="2">5-aminoimidazole-4-carboxamide-1-beta-D-ribofuranosyl 5'-monophosphate--formate ligase</fullName>
    </alternativeName>
</protein>
<feature type="chain" id="PRO_0000348632" description="5-formaminoimidazole-4-carboxamide-1-(beta)-D-ribofuranosyl 5'-monophosphate synthetase">
    <location>
        <begin position="1"/>
        <end position="335"/>
    </location>
</feature>
<feature type="domain" description="ATP-grasp" evidence="2">
    <location>
        <begin position="107"/>
        <end position="315"/>
    </location>
</feature>
<feature type="binding site" evidence="2">
    <location>
        <position position="21"/>
    </location>
    <ligand>
        <name>5-amino-1-(5-phospho-beta-D-ribosyl)imidazole-4-carboxamide</name>
        <dbReference type="ChEBI" id="CHEBI:58475"/>
    </ligand>
</feature>
<feature type="binding site" evidence="2">
    <location>
        <position position="86"/>
    </location>
    <ligand>
        <name>5-amino-1-(5-phospho-beta-D-ribosyl)imidazole-4-carboxamide</name>
        <dbReference type="ChEBI" id="CHEBI:58475"/>
    </ligand>
</feature>
<feature type="binding site" evidence="2">
    <location>
        <begin position="137"/>
        <end position="189"/>
    </location>
    <ligand>
        <name>ATP</name>
        <dbReference type="ChEBI" id="CHEBI:30616"/>
    </ligand>
</feature>
<feature type="binding site" evidence="2">
    <location>
        <position position="211"/>
    </location>
    <ligand>
        <name>ATP</name>
        <dbReference type="ChEBI" id="CHEBI:30616"/>
    </ligand>
</feature>
<feature type="binding site" evidence="2">
    <location>
        <position position="231"/>
    </location>
    <ligand>
        <name>5-amino-1-(5-phospho-beta-D-ribosyl)imidazole-4-carboxamide</name>
        <dbReference type="ChEBI" id="CHEBI:58475"/>
    </ligand>
</feature>
<feature type="binding site" evidence="2">
    <location>
        <position position="270"/>
    </location>
    <ligand>
        <name>Mg(2+)</name>
        <dbReference type="ChEBI" id="CHEBI:18420"/>
    </ligand>
</feature>
<feature type="binding site" evidence="2">
    <location>
        <position position="283"/>
    </location>
    <ligand>
        <name>Mg(2+)</name>
        <dbReference type="ChEBI" id="CHEBI:18420"/>
    </ligand>
</feature>
<sequence length="335" mass="37962">MSQILKRYDLDKLAVATIASHTALQILRGAKKYGFRTIAIAKNEDIAQFYKQFFFIDEVWTGDFSNFRKTAERLVAENALLIPHGSYVEYVGWRQALEAPVPTLGCRELLRWEADQYKKMALLEEAGIPIPRVYRSPTEVDGPVIVKFFGAKGGRGYFVAKGREELEARLKALGEEYIIQEYLFGVPAYYHYFASPVYSRIEVFGADIRYESNVDGRTFGWAEPTFVVVGNLSLVLRESLLPIIHKYGVQFAKAVEKRVGCRLAGPYCLESIIKDDMSIVVFEFSGRIVAGTNIYMGYGSPYSVLYFDKPMDMGERIAHEIREAAKAGKLDQLFT</sequence>
<accession>A4WN42</accession>
<comment type="function">
    <text evidence="2">Catalyzes the ATP- and formate-dependent formylation of 5-aminoimidazole-4-carboxamide-1-beta-d-ribofuranosyl 5'-monophosphate (AICAR) to 5-formaminoimidazole-4-carboxamide-1-beta-d-ribofuranosyl 5'-monophosphate (FAICAR) in the absence of folates.</text>
</comment>
<comment type="catalytic activity">
    <reaction evidence="2">
        <text>5-amino-1-(5-phospho-beta-D-ribosyl)imidazole-4-carboxamide + formate + ATP = 5-formamido-1-(5-phospho-D-ribosyl)imidazole-4-carboxamide + ADP + phosphate</text>
        <dbReference type="Rhea" id="RHEA:24836"/>
        <dbReference type="ChEBI" id="CHEBI:15740"/>
        <dbReference type="ChEBI" id="CHEBI:30616"/>
        <dbReference type="ChEBI" id="CHEBI:43474"/>
        <dbReference type="ChEBI" id="CHEBI:58467"/>
        <dbReference type="ChEBI" id="CHEBI:58475"/>
        <dbReference type="ChEBI" id="CHEBI:456216"/>
        <dbReference type="EC" id="6.3.4.23"/>
    </reaction>
</comment>
<comment type="cofactor">
    <cofactor evidence="1">
        <name>Mg(2+)</name>
        <dbReference type="ChEBI" id="CHEBI:18420"/>
    </cofactor>
    <cofactor evidence="1">
        <name>Mn(2+)</name>
        <dbReference type="ChEBI" id="CHEBI:29035"/>
    </cofactor>
    <text evidence="1">Binds 1 Mg(2+) or Mn(2+) ion per subunit.</text>
</comment>
<comment type="pathway">
    <text evidence="2">Purine metabolism; IMP biosynthesis via de novo pathway; 5-formamido-1-(5-phospho-D-ribosyl)imidazole-4-carboxamide from 5-amino-1-(5-phospho-D-ribosyl)imidazole-4-carboxamide (formate route): step 1/1.</text>
</comment>
<comment type="similarity">
    <text evidence="2">Belongs to the phosphohexose mutase family.</text>
</comment>
<evidence type="ECO:0000250" key="1"/>
<evidence type="ECO:0000255" key="2">
    <source>
        <dbReference type="HAMAP-Rule" id="MF_01163"/>
    </source>
</evidence>